<keyword id="KW-0027">Amidation</keyword>
<keyword id="KW-0878">Amphibian defense peptide</keyword>
<keyword id="KW-0044">Antibiotic</keyword>
<keyword id="KW-0929">Antimicrobial</keyword>
<keyword id="KW-0903">Direct protein sequencing</keyword>
<keyword id="KW-0964">Secreted</keyword>
<reference key="1">
    <citation type="journal article" date="2006" name="Toxicon">
        <title>New caerin antibiotic peptides from the skin secretion of the dainty green tree frog Litoria gracilenta. Identification using positive and negative ion electrospray mass spectrometry.</title>
        <authorList>
            <person name="Maclean M.J."/>
            <person name="Brinkworth C.S."/>
            <person name="Bilusich D."/>
            <person name="Bowie J.H."/>
            <person name="Doyle J.R."/>
            <person name="Llewellyn L.E."/>
            <person name="Tyler M.J."/>
        </authorList>
    </citation>
    <scope>PROTEIN SEQUENCE</scope>
    <scope>AMIDATION AT LEU-25</scope>
    <scope>FUNCTION</scope>
    <scope>MASS SPECTROMETRY</scope>
    <scope>SYNTHESIS OF 1-25</scope>
    <source>
        <tissue>Skin secretion</tissue>
    </source>
</reference>
<comment type="function">
    <text evidence="1">Shows significant activity against Gram-positive organisms, but is less effective against Gram-negative organisms.</text>
</comment>
<comment type="subcellular location">
    <subcellularLocation>
        <location>Secreted</location>
    </subcellularLocation>
</comment>
<comment type="tissue specificity">
    <text>Expressed by the skin dorsal glands.</text>
</comment>
<comment type="mass spectrometry"/>
<comment type="similarity">
    <text evidence="2">Belongs to the frog skin active peptide (FSAP) family. Caerin subfamily.</text>
</comment>
<evidence type="ECO:0000269" key="1">
    <source>
    </source>
</evidence>
<evidence type="ECO:0000305" key="2"/>
<dbReference type="SMR" id="P0C2A7"/>
<dbReference type="GO" id="GO:0005576">
    <property type="term" value="C:extracellular region"/>
    <property type="evidence" value="ECO:0007669"/>
    <property type="project" value="UniProtKB-SubCell"/>
</dbReference>
<dbReference type="GO" id="GO:0042742">
    <property type="term" value="P:defense response to bacterium"/>
    <property type="evidence" value="ECO:0007669"/>
    <property type="project" value="UniProtKB-KW"/>
</dbReference>
<dbReference type="InterPro" id="IPR010000">
    <property type="entry name" value="Caerin_1"/>
</dbReference>
<dbReference type="Pfam" id="PF07440">
    <property type="entry name" value="Caerin_1"/>
    <property type="match status" value="1"/>
</dbReference>
<proteinExistence type="evidence at protein level"/>
<sequence>GLFSVLGSVAKHLLPHVVPVIAEKL</sequence>
<organism>
    <name type="scientific">Ranoidea gracilenta</name>
    <name type="common">Dainty green tree frog</name>
    <name type="synonym">Litoria gracilenta</name>
    <dbReference type="NCBI Taxonomy" id="95133"/>
    <lineage>
        <taxon>Eukaryota</taxon>
        <taxon>Metazoa</taxon>
        <taxon>Chordata</taxon>
        <taxon>Craniata</taxon>
        <taxon>Vertebrata</taxon>
        <taxon>Euteleostomi</taxon>
        <taxon>Amphibia</taxon>
        <taxon>Batrachia</taxon>
        <taxon>Anura</taxon>
        <taxon>Neobatrachia</taxon>
        <taxon>Hyloidea</taxon>
        <taxon>Hylidae</taxon>
        <taxon>Pelodryadinae</taxon>
        <taxon>Ranoidea</taxon>
    </lineage>
</organism>
<protein>
    <recommendedName>
        <fullName>Caerin-1.18</fullName>
    </recommendedName>
</protein>
<accession>P0C2A7</accession>
<feature type="peptide" id="PRO_0000271469" description="Caerin-1.18">
    <location>
        <begin position="1"/>
        <end position="25"/>
    </location>
</feature>
<feature type="modified residue" description="Leucine amide" evidence="1">
    <location>
        <position position="25"/>
    </location>
</feature>
<name>CR118_RANGR</name>